<reference key="1">
    <citation type="journal article" date="2000" name="Nature">
        <title>The genome sequence of the food-borne pathogen Campylobacter jejuni reveals hypervariable sequences.</title>
        <authorList>
            <person name="Parkhill J."/>
            <person name="Wren B.W."/>
            <person name="Mungall K.L."/>
            <person name="Ketley J.M."/>
            <person name="Churcher C.M."/>
            <person name="Basham D."/>
            <person name="Chillingworth T."/>
            <person name="Davies R.M."/>
            <person name="Feltwell T."/>
            <person name="Holroyd S."/>
            <person name="Jagels K."/>
            <person name="Karlyshev A.V."/>
            <person name="Moule S."/>
            <person name="Pallen M.J."/>
            <person name="Penn C.W."/>
            <person name="Quail M.A."/>
            <person name="Rajandream M.A."/>
            <person name="Rutherford K.M."/>
            <person name="van Vliet A.H.M."/>
            <person name="Whitehead S."/>
            <person name="Barrell B.G."/>
        </authorList>
    </citation>
    <scope>NUCLEOTIDE SEQUENCE [LARGE SCALE GENOMIC DNA]</scope>
    <source>
        <strain>ATCC 700819 / NCTC 11168</strain>
    </source>
</reference>
<name>HISX_CAMJE</name>
<protein>
    <recommendedName>
        <fullName evidence="1">Histidinol dehydrogenase</fullName>
        <shortName evidence="1">HDH</shortName>
        <ecNumber evidence="1">1.1.1.23</ecNumber>
    </recommendedName>
</protein>
<comment type="function">
    <text evidence="1">Catalyzes the sequential NAD-dependent oxidations of L-histidinol to L-histidinaldehyde and then to L-histidine.</text>
</comment>
<comment type="catalytic activity">
    <reaction evidence="1">
        <text>L-histidinol + 2 NAD(+) + H2O = L-histidine + 2 NADH + 3 H(+)</text>
        <dbReference type="Rhea" id="RHEA:20641"/>
        <dbReference type="ChEBI" id="CHEBI:15377"/>
        <dbReference type="ChEBI" id="CHEBI:15378"/>
        <dbReference type="ChEBI" id="CHEBI:57540"/>
        <dbReference type="ChEBI" id="CHEBI:57595"/>
        <dbReference type="ChEBI" id="CHEBI:57699"/>
        <dbReference type="ChEBI" id="CHEBI:57945"/>
        <dbReference type="EC" id="1.1.1.23"/>
    </reaction>
</comment>
<comment type="cofactor">
    <cofactor evidence="1">
        <name>Zn(2+)</name>
        <dbReference type="ChEBI" id="CHEBI:29105"/>
    </cofactor>
    <text evidence="1">Binds 1 zinc ion per subunit.</text>
</comment>
<comment type="pathway">
    <text evidence="1">Amino-acid biosynthesis; L-histidine biosynthesis; L-histidine from 5-phospho-alpha-D-ribose 1-diphosphate: step 9/9.</text>
</comment>
<comment type="similarity">
    <text evidence="1">Belongs to the histidinol dehydrogenase family.</text>
</comment>
<sequence length="428" mass="46446">MQILVYDNLDEKQKEEALKRPAISAKDEISKIVSSIIKEVQEKGDKALIEQALKFDKAEISKIKITQEEITQASNRLDKDLQEAILVAYENIKKFHEAQIPHEIALETTKGVKCEVLTRPIEKVGLYIPGGLAPLFSTVLMLAIPAKIAGCEKIVLASPAKINDAVLFCAKLCGVDEIYQMGGAGAIAALTYGTQSVLKVDKIFGPGNAFVTEAKRQVSSDINGAAIDMQAGPSEVLVIADDLANEKFVASDLLSQAEHGADSQVILVCLSQDFAKKASDEVQSQLELLPRKELASKSIANSRIIIAKDLNQALEISNLYAPEHLIIQTQNPRELLKGVKHAGSVFLGAYSPESMGDYASGTNHVLPTYGLTKTHSSLGLADFSKRMTVQELSKEGFLALGKSVEILAQNEHLDAHKNAVTFRLESLK</sequence>
<accession>Q9PM77</accession>
<accession>Q0P830</accession>
<feature type="chain" id="PRO_0000135751" description="Histidinol dehydrogenase">
    <location>
        <begin position="1"/>
        <end position="428"/>
    </location>
</feature>
<feature type="active site" description="Proton acceptor" evidence="1">
    <location>
        <position position="323"/>
    </location>
</feature>
<feature type="active site" description="Proton acceptor" evidence="1">
    <location>
        <position position="324"/>
    </location>
</feature>
<feature type="binding site" evidence="1">
    <location>
        <position position="234"/>
    </location>
    <ligand>
        <name>substrate</name>
    </ligand>
</feature>
<feature type="binding site" evidence="1">
    <location>
        <position position="256"/>
    </location>
    <ligand>
        <name>substrate</name>
    </ligand>
</feature>
<feature type="binding site" evidence="1">
    <location>
        <position position="256"/>
    </location>
    <ligand>
        <name>Zn(2+)</name>
        <dbReference type="ChEBI" id="CHEBI:29105"/>
    </ligand>
</feature>
<feature type="binding site" evidence="1">
    <location>
        <position position="259"/>
    </location>
    <ligand>
        <name>substrate</name>
    </ligand>
</feature>
<feature type="binding site" evidence="1">
    <location>
        <position position="259"/>
    </location>
    <ligand>
        <name>Zn(2+)</name>
        <dbReference type="ChEBI" id="CHEBI:29105"/>
    </ligand>
</feature>
<feature type="binding site" evidence="1">
    <location>
        <position position="324"/>
    </location>
    <ligand>
        <name>substrate</name>
    </ligand>
</feature>
<feature type="binding site" evidence="1">
    <location>
        <position position="357"/>
    </location>
    <ligand>
        <name>substrate</name>
    </ligand>
</feature>
<feature type="binding site" evidence="1">
    <location>
        <position position="357"/>
    </location>
    <ligand>
        <name>Zn(2+)</name>
        <dbReference type="ChEBI" id="CHEBI:29105"/>
    </ligand>
</feature>
<feature type="binding site" evidence="1">
    <location>
        <position position="411"/>
    </location>
    <ligand>
        <name>substrate</name>
    </ligand>
</feature>
<feature type="binding site" evidence="1">
    <location>
        <position position="416"/>
    </location>
    <ligand>
        <name>substrate</name>
    </ligand>
</feature>
<feature type="binding site" evidence="1">
    <location>
        <position position="416"/>
    </location>
    <ligand>
        <name>Zn(2+)</name>
        <dbReference type="ChEBI" id="CHEBI:29105"/>
    </ligand>
</feature>
<keyword id="KW-0028">Amino-acid biosynthesis</keyword>
<keyword id="KW-0368">Histidine biosynthesis</keyword>
<keyword id="KW-0479">Metal-binding</keyword>
<keyword id="KW-0520">NAD</keyword>
<keyword id="KW-0560">Oxidoreductase</keyword>
<keyword id="KW-1185">Reference proteome</keyword>
<keyword id="KW-0862">Zinc</keyword>
<organism>
    <name type="scientific">Campylobacter jejuni subsp. jejuni serotype O:2 (strain ATCC 700819 / NCTC 11168)</name>
    <dbReference type="NCBI Taxonomy" id="192222"/>
    <lineage>
        <taxon>Bacteria</taxon>
        <taxon>Pseudomonadati</taxon>
        <taxon>Campylobacterota</taxon>
        <taxon>Epsilonproteobacteria</taxon>
        <taxon>Campylobacterales</taxon>
        <taxon>Campylobacteraceae</taxon>
        <taxon>Campylobacter</taxon>
    </lineage>
</organism>
<evidence type="ECO:0000255" key="1">
    <source>
        <dbReference type="HAMAP-Rule" id="MF_01024"/>
    </source>
</evidence>
<gene>
    <name evidence="1" type="primary">hisD</name>
    <name type="ordered locus">Cj1598</name>
</gene>
<proteinExistence type="inferred from homology"/>
<dbReference type="EC" id="1.1.1.23" evidence="1"/>
<dbReference type="EMBL" id="AL111168">
    <property type="protein sequence ID" value="CAL35695.1"/>
    <property type="molecule type" value="Genomic_DNA"/>
</dbReference>
<dbReference type="PIR" id="D81255">
    <property type="entry name" value="D81255"/>
</dbReference>
<dbReference type="RefSeq" id="WP_002858444.1">
    <property type="nucleotide sequence ID" value="NZ_SZUC01000002.1"/>
</dbReference>
<dbReference type="RefSeq" id="YP_002344967.1">
    <property type="nucleotide sequence ID" value="NC_002163.1"/>
</dbReference>
<dbReference type="SMR" id="Q9PM77"/>
<dbReference type="STRING" id="192222.Cj1598"/>
<dbReference type="PaxDb" id="192222-Cj1598"/>
<dbReference type="EnsemblBacteria" id="CAL35695">
    <property type="protein sequence ID" value="CAL35695"/>
    <property type="gene ID" value="Cj1598"/>
</dbReference>
<dbReference type="GeneID" id="905868"/>
<dbReference type="KEGG" id="cje:Cj1598"/>
<dbReference type="PATRIC" id="fig|192222.6.peg.1574"/>
<dbReference type="eggNOG" id="COG0141">
    <property type="taxonomic scope" value="Bacteria"/>
</dbReference>
<dbReference type="HOGENOM" id="CLU_006732_3_0_7"/>
<dbReference type="OrthoDB" id="9805269at2"/>
<dbReference type="UniPathway" id="UPA00031">
    <property type="reaction ID" value="UER00014"/>
</dbReference>
<dbReference type="Proteomes" id="UP000000799">
    <property type="component" value="Chromosome"/>
</dbReference>
<dbReference type="GO" id="GO:0005829">
    <property type="term" value="C:cytosol"/>
    <property type="evidence" value="ECO:0007669"/>
    <property type="project" value="TreeGrafter"/>
</dbReference>
<dbReference type="GO" id="GO:0004399">
    <property type="term" value="F:histidinol dehydrogenase activity"/>
    <property type="evidence" value="ECO:0007669"/>
    <property type="project" value="UniProtKB-UniRule"/>
</dbReference>
<dbReference type="GO" id="GO:0051287">
    <property type="term" value="F:NAD binding"/>
    <property type="evidence" value="ECO:0007669"/>
    <property type="project" value="InterPro"/>
</dbReference>
<dbReference type="GO" id="GO:0008270">
    <property type="term" value="F:zinc ion binding"/>
    <property type="evidence" value="ECO:0007669"/>
    <property type="project" value="UniProtKB-UniRule"/>
</dbReference>
<dbReference type="GO" id="GO:0000105">
    <property type="term" value="P:L-histidine biosynthetic process"/>
    <property type="evidence" value="ECO:0007669"/>
    <property type="project" value="UniProtKB-UniRule"/>
</dbReference>
<dbReference type="CDD" id="cd06572">
    <property type="entry name" value="Histidinol_dh"/>
    <property type="match status" value="1"/>
</dbReference>
<dbReference type="FunFam" id="1.20.5.1300:FF:000001">
    <property type="entry name" value="Histidine biosynthesis trifunctional protein"/>
    <property type="match status" value="1"/>
</dbReference>
<dbReference type="FunFam" id="3.40.50.1980:FF:000001">
    <property type="entry name" value="Histidinol dehydrogenase"/>
    <property type="match status" value="1"/>
</dbReference>
<dbReference type="FunFam" id="3.40.50.1980:FF:000002">
    <property type="entry name" value="Histidinol dehydrogenase, chloroplastic"/>
    <property type="match status" value="1"/>
</dbReference>
<dbReference type="Gene3D" id="1.20.5.1300">
    <property type="match status" value="1"/>
</dbReference>
<dbReference type="Gene3D" id="3.40.50.1980">
    <property type="entry name" value="Nitrogenase molybdenum iron protein domain"/>
    <property type="match status" value="2"/>
</dbReference>
<dbReference type="HAMAP" id="MF_01024">
    <property type="entry name" value="HisD"/>
    <property type="match status" value="1"/>
</dbReference>
<dbReference type="InterPro" id="IPR016161">
    <property type="entry name" value="Ald_DH/histidinol_DH"/>
</dbReference>
<dbReference type="InterPro" id="IPR001692">
    <property type="entry name" value="Histidinol_DH_CS"/>
</dbReference>
<dbReference type="InterPro" id="IPR022695">
    <property type="entry name" value="Histidinol_DH_monofunct"/>
</dbReference>
<dbReference type="InterPro" id="IPR012131">
    <property type="entry name" value="Hstdl_DH"/>
</dbReference>
<dbReference type="NCBIfam" id="TIGR00069">
    <property type="entry name" value="hisD"/>
    <property type="match status" value="1"/>
</dbReference>
<dbReference type="PANTHER" id="PTHR21256:SF2">
    <property type="entry name" value="HISTIDINE BIOSYNTHESIS TRIFUNCTIONAL PROTEIN"/>
    <property type="match status" value="1"/>
</dbReference>
<dbReference type="PANTHER" id="PTHR21256">
    <property type="entry name" value="HISTIDINOL DEHYDROGENASE HDH"/>
    <property type="match status" value="1"/>
</dbReference>
<dbReference type="Pfam" id="PF00815">
    <property type="entry name" value="Histidinol_dh"/>
    <property type="match status" value="1"/>
</dbReference>
<dbReference type="PIRSF" id="PIRSF000099">
    <property type="entry name" value="Histidinol_dh"/>
    <property type="match status" value="1"/>
</dbReference>
<dbReference type="PRINTS" id="PR00083">
    <property type="entry name" value="HOLDHDRGNASE"/>
</dbReference>
<dbReference type="SUPFAM" id="SSF53720">
    <property type="entry name" value="ALDH-like"/>
    <property type="match status" value="1"/>
</dbReference>
<dbReference type="PROSITE" id="PS00611">
    <property type="entry name" value="HISOL_DEHYDROGENASE"/>
    <property type="match status" value="1"/>
</dbReference>